<feature type="chain" id="PRO_0000104825" description="Large ribosomal subunit protein uL15">
    <location>
        <begin position="1"/>
        <end position="146"/>
    </location>
</feature>
<feature type="region of interest" description="Disordered" evidence="2">
    <location>
        <begin position="1"/>
        <end position="51"/>
    </location>
</feature>
<feature type="compositionally biased region" description="Basic and acidic residues" evidence="2">
    <location>
        <begin position="1"/>
        <end position="13"/>
    </location>
</feature>
<feature type="compositionally biased region" description="Gly residues" evidence="2">
    <location>
        <begin position="23"/>
        <end position="35"/>
    </location>
</feature>
<feature type="compositionally biased region" description="Gly residues" evidence="2">
    <location>
        <begin position="42"/>
        <end position="51"/>
    </location>
</feature>
<comment type="function">
    <text evidence="1">Binds to the 23S rRNA.</text>
</comment>
<comment type="subunit">
    <text evidence="1">Part of the 50S ribosomal subunit.</text>
</comment>
<comment type="similarity">
    <text evidence="1">Belongs to the universal ribosomal protein uL15 family.</text>
</comment>
<accession>Q7CNP1</accession>
<gene>
    <name evidence="1" type="primary">rplO</name>
    <name type="ordered locus">spyM18_0072</name>
</gene>
<proteinExistence type="inferred from homology"/>
<sequence>MKLHELKAAEGSRKVRNRVGRGTSSGNGKTSGRGQKGQKARSGGGVRLGFEGGQTPLFRRIPKRGFTNINTKEYALVNLDQLNVFDDGTEVTPAILKDAGIVRAEKSGVKVLGNGELTKKLTVKAAKFSKSAEAAIIAKGGSIEVI</sequence>
<evidence type="ECO:0000255" key="1">
    <source>
        <dbReference type="HAMAP-Rule" id="MF_01341"/>
    </source>
</evidence>
<evidence type="ECO:0000256" key="2">
    <source>
        <dbReference type="SAM" id="MobiDB-lite"/>
    </source>
</evidence>
<evidence type="ECO:0000305" key="3"/>
<dbReference type="EMBL" id="AE009949">
    <property type="protein sequence ID" value="AAL96895.1"/>
    <property type="molecule type" value="Genomic_DNA"/>
</dbReference>
<dbReference type="RefSeq" id="WP_002986622.1">
    <property type="nucleotide sequence ID" value="NC_003485.1"/>
</dbReference>
<dbReference type="SMR" id="Q7CNP1"/>
<dbReference type="GeneID" id="69900045"/>
<dbReference type="KEGG" id="spm:spyM18_0072"/>
<dbReference type="HOGENOM" id="CLU_055188_4_2_9"/>
<dbReference type="GO" id="GO:0022625">
    <property type="term" value="C:cytosolic large ribosomal subunit"/>
    <property type="evidence" value="ECO:0007669"/>
    <property type="project" value="TreeGrafter"/>
</dbReference>
<dbReference type="GO" id="GO:0019843">
    <property type="term" value="F:rRNA binding"/>
    <property type="evidence" value="ECO:0007669"/>
    <property type="project" value="UniProtKB-UniRule"/>
</dbReference>
<dbReference type="GO" id="GO:0003735">
    <property type="term" value="F:structural constituent of ribosome"/>
    <property type="evidence" value="ECO:0007669"/>
    <property type="project" value="InterPro"/>
</dbReference>
<dbReference type="GO" id="GO:0006412">
    <property type="term" value="P:translation"/>
    <property type="evidence" value="ECO:0007669"/>
    <property type="project" value="UniProtKB-UniRule"/>
</dbReference>
<dbReference type="Gene3D" id="3.100.10.10">
    <property type="match status" value="1"/>
</dbReference>
<dbReference type="HAMAP" id="MF_01341">
    <property type="entry name" value="Ribosomal_uL15"/>
    <property type="match status" value="1"/>
</dbReference>
<dbReference type="InterPro" id="IPR030878">
    <property type="entry name" value="Ribosomal_uL15"/>
</dbReference>
<dbReference type="InterPro" id="IPR021131">
    <property type="entry name" value="Ribosomal_uL15/eL18"/>
</dbReference>
<dbReference type="InterPro" id="IPR036227">
    <property type="entry name" value="Ribosomal_uL15/eL18_sf"/>
</dbReference>
<dbReference type="InterPro" id="IPR005749">
    <property type="entry name" value="Ribosomal_uL15_bac-type"/>
</dbReference>
<dbReference type="InterPro" id="IPR001196">
    <property type="entry name" value="Ribosomal_uL15_CS"/>
</dbReference>
<dbReference type="NCBIfam" id="TIGR01071">
    <property type="entry name" value="rplO_bact"/>
    <property type="match status" value="1"/>
</dbReference>
<dbReference type="PANTHER" id="PTHR12934">
    <property type="entry name" value="50S RIBOSOMAL PROTEIN L15"/>
    <property type="match status" value="1"/>
</dbReference>
<dbReference type="PANTHER" id="PTHR12934:SF11">
    <property type="entry name" value="LARGE RIBOSOMAL SUBUNIT PROTEIN UL15M"/>
    <property type="match status" value="1"/>
</dbReference>
<dbReference type="Pfam" id="PF00828">
    <property type="entry name" value="Ribosomal_L27A"/>
    <property type="match status" value="1"/>
</dbReference>
<dbReference type="SUPFAM" id="SSF52080">
    <property type="entry name" value="Ribosomal proteins L15p and L18e"/>
    <property type="match status" value="1"/>
</dbReference>
<dbReference type="PROSITE" id="PS00475">
    <property type="entry name" value="RIBOSOMAL_L15"/>
    <property type="match status" value="1"/>
</dbReference>
<reference key="1">
    <citation type="journal article" date="2002" name="Proc. Natl. Acad. Sci. U.S.A.">
        <title>Genome sequence and comparative microarray analysis of serotype M18 group A Streptococcus strains associated with acute rheumatic fever outbreaks.</title>
        <authorList>
            <person name="Smoot J.C."/>
            <person name="Barbian K.D."/>
            <person name="Van Gompel J.J."/>
            <person name="Smoot L.M."/>
            <person name="Chaussee M.S."/>
            <person name="Sylva G.L."/>
            <person name="Sturdevant D.E."/>
            <person name="Ricklefs S.M."/>
            <person name="Porcella S.F."/>
            <person name="Parkins L.D."/>
            <person name="Beres S.B."/>
            <person name="Campbell D.S."/>
            <person name="Smith T.M."/>
            <person name="Zhang Q."/>
            <person name="Kapur V."/>
            <person name="Daly J.A."/>
            <person name="Veasy L.G."/>
            <person name="Musser J.M."/>
        </authorList>
    </citation>
    <scope>NUCLEOTIDE SEQUENCE [LARGE SCALE GENOMIC DNA]</scope>
    <source>
        <strain>MGAS8232</strain>
    </source>
</reference>
<organism>
    <name type="scientific">Streptococcus pyogenes serotype M18 (strain MGAS8232)</name>
    <dbReference type="NCBI Taxonomy" id="186103"/>
    <lineage>
        <taxon>Bacteria</taxon>
        <taxon>Bacillati</taxon>
        <taxon>Bacillota</taxon>
        <taxon>Bacilli</taxon>
        <taxon>Lactobacillales</taxon>
        <taxon>Streptococcaceae</taxon>
        <taxon>Streptococcus</taxon>
    </lineage>
</organism>
<name>RL15_STRP8</name>
<protein>
    <recommendedName>
        <fullName evidence="1">Large ribosomal subunit protein uL15</fullName>
    </recommendedName>
    <alternativeName>
        <fullName evidence="3">50S ribosomal protein L15</fullName>
    </alternativeName>
</protein>
<keyword id="KW-0687">Ribonucleoprotein</keyword>
<keyword id="KW-0689">Ribosomal protein</keyword>
<keyword id="KW-0694">RNA-binding</keyword>
<keyword id="KW-0699">rRNA-binding</keyword>